<proteinExistence type="evidence at protein level"/>
<comment type="function">
    <text evidence="9">Receptor tyrosine kinase which binds promiscuously membrane-bound ephrin family ligands residing on adjacent cells, leading to contact-dependent bidirectional signaling into neighboring cells. The signaling pathway downstream of the receptor is referred to as forward signaling while the signaling pathway downstream of the ephrin ligand is referred to as reverse signaling. Highly promiscuous for ephrin-A ligands it binds preferentially EFNA5. Upon activation by EFNA5 regulates cell-cell adhesion, cytoskeletal organization and cell migration. Plays a role in cardiac cells migration and differentiation and regulates the formation of the atrioventricular canal and septum during development probably through activation by EFNA1. Involved in the retinotectal mapping of neurons. May also control the segregation but not the guidance of motor and sensory axons during neuromuscular circuit development.</text>
</comment>
<comment type="catalytic activity">
    <reaction evidence="8">
        <text>L-tyrosyl-[protein] + ATP = O-phospho-L-tyrosyl-[protein] + ADP + H(+)</text>
        <dbReference type="Rhea" id="RHEA:10596"/>
        <dbReference type="Rhea" id="RHEA-COMP:10136"/>
        <dbReference type="Rhea" id="RHEA-COMP:20101"/>
        <dbReference type="ChEBI" id="CHEBI:15378"/>
        <dbReference type="ChEBI" id="CHEBI:30616"/>
        <dbReference type="ChEBI" id="CHEBI:46858"/>
        <dbReference type="ChEBI" id="CHEBI:61978"/>
        <dbReference type="ChEBI" id="CHEBI:456216"/>
        <dbReference type="EC" id="2.7.10.1"/>
    </reaction>
</comment>
<comment type="subunit">
    <text evidence="1 9 12 13 18 20">Heterotetramer upon binding of the ligand. The heterotetramer is composed of an ephrin dimer and a receptor dimer. Oligomerization is probably required to induce biological responses. Forms a ternary EFNA5-EPHA3-ADAM10 complex mediating EFNA5 extracellular domain shedding by ADAM10 which regulates the EFNA5-EPHA3 complex internalization and function. Interacts with NCK1 (via SH2 domain); mediates EFNA5-EPHA3 signaling (By similarity). Interacts (phosphorylated) with PTPN1; dephosphorylates EPHA3 and may regulate its trafficking and function. Interacts (phosphorylated) with CRK; mediates EFNA5-EPHA3 signaling through RHOA GTPase activation.</text>
</comment>
<comment type="interaction">
    <interactant intactId="EBI-1641575">
        <id>P29320</id>
    </interactant>
    <interactant intactId="EBI-702104">
        <id>P29317</id>
        <label>EPHA2</label>
    </interactant>
    <organismsDiffer>false</organismsDiffer>
    <experiments>3</experiments>
</comment>
<comment type="interaction">
    <interactant intactId="EBI-1641575">
        <id>P29320</id>
    </interactant>
    <interactant intactId="EBI-1383428">
        <id>Q15375</id>
        <label>EPHA7</label>
    </interactant>
    <organismsDiffer>false</organismsDiffer>
    <experiments>4</experiments>
</comment>
<comment type="subcellular location">
    <molecule>Isoform 1</molecule>
    <subcellularLocation>
        <location evidence="9">Cell membrane</location>
        <topology evidence="3">Single-pass type I membrane protein</topology>
    </subcellularLocation>
</comment>
<comment type="subcellular location">
    <molecule>Isoform 2</molecule>
    <subcellularLocation>
        <location evidence="20">Secreted</location>
    </subcellularLocation>
</comment>
<comment type="alternative products">
    <event type="alternative splicing"/>
    <isoform>
        <id>P29320-1</id>
        <name>1</name>
        <sequence type="displayed"/>
    </isoform>
    <isoform>
        <id>P29320-2</id>
        <name>2</name>
        <sequence type="described" ref="VSP_002995 VSP_002996"/>
    </isoform>
</comment>
<comment type="tissue specificity">
    <text>Widely expressed. Highest level in placenta.</text>
</comment>
<comment type="PTM">
    <text evidence="9 18 20">Autophosphorylates upon activation by EFNA5. Phosphorylation on Tyr-602 mediates interaction with NCK1. Dephosphorylated by PTPN1.</text>
</comment>
<comment type="disease" evidence="10">
    <disease id="DI-01359">
        <name>Colorectal cancer</name>
        <acronym>CRC</acronym>
        <description>A complex disease characterized by malignant lesions arising from the inner wall of the large intestine (the colon) and the rectum. Genetic alterations are often associated with progression from premalignant lesion (adenoma) to invasive adenocarcinoma. Risk factors for cancer of the colon and rectum include colon polyps, long-standing ulcerative colitis, and genetic family history.</description>
        <dbReference type="MIM" id="114500"/>
    </disease>
    <text>The gene represented in this entry may be involved in disease pathogenesis.</text>
</comment>
<comment type="similarity">
    <text evidence="4">Belongs to the protein kinase superfamily. Tyr protein kinase family. Ephrin receptor subfamily.</text>
</comment>
<comment type="online information" name="Atlas of Genetics and Cytogenetics in Oncology and Haematology">
    <link uri="https://atlasgeneticsoncology.org/gene/40463/EPHA3"/>
</comment>
<reference key="1">
    <citation type="journal article" date="1992" name="Proc. Natl. Acad. Sci. U.S.A.">
        <title>Molecular cloning of HEK, the gene encoding a receptor tyrosine kinase expressed by human lymphoid tumor cell lines.</title>
        <authorList>
            <person name="Wicks I.P."/>
            <person name="Wilkinson D."/>
            <person name="Salvaris E."/>
            <person name="Boyd A.W."/>
        </authorList>
    </citation>
    <scope>NUCLEOTIDE SEQUENCE [MRNA] (ISOFORM 1)</scope>
    <scope>VARIANT ARG-924</scope>
</reference>
<reference key="2">
    <citation type="journal article" date="2000" name="Cancer Res.">
        <title>Identification of a tumor-specific shared antigen derived from an Eph receptor and presented to CD4 T cells on HLA class II molecules.</title>
        <authorList>
            <person name="Chiari R."/>
            <person name="Hames G."/>
            <person name="Stroobant V."/>
            <person name="Texier C."/>
            <person name="Maillere B."/>
            <person name="Boon T."/>
            <person name="Coulie P.G."/>
        </authorList>
    </citation>
    <scope>NUCLEOTIDE SEQUENCE [MRNA] (ISOFORMS 1 AND 2)</scope>
    <source>
        <tissue>Melanoma</tissue>
    </source>
</reference>
<reference key="3">
    <citation type="journal article" date="1992" name="J. Biol. Chem.">
        <title>Isolation and characterization of a novel receptor-type protein tyrosine kinase (hek) from a human pre-B cell line.</title>
        <authorList>
            <person name="Boyd A.W."/>
            <person name="Ward L.D."/>
            <person name="Wicks I.P."/>
            <person name="Simpson R.J."/>
            <person name="Salvaris E."/>
            <person name="Wilks A."/>
            <person name="Welch K."/>
            <person name="Loudovaris M."/>
            <person name="Rockman S."/>
            <person name="Busmanis I."/>
        </authorList>
    </citation>
    <scope>PROTEIN SEQUENCE OF 21-29 AND 840-860</scope>
    <scope>CHARACTERIZATION</scope>
</reference>
<reference key="4">
    <citation type="journal article" date="1997" name="Cell">
        <title>Unified nomenclature for Eph family receptors and their ligands, the ephrins.</title>
        <authorList>
            <consortium name="Eph nomenclature committee"/>
        </authorList>
    </citation>
    <scope>NOMENCLATURE</scope>
</reference>
<reference key="5">
    <citation type="journal article" date="2002" name="J. Cell Sci.">
        <title>Ephrin-A5 induces rounding, blebbing and de-adhesion of EphA3-expressing 293T and melanoma cells by CrkII and Rho-mediated signalling.</title>
        <authorList>
            <person name="Lawrenson I.D."/>
            <person name="Wimmer-Kleikamp S.H."/>
            <person name="Lock P."/>
            <person name="Schoenwaelder S.M."/>
            <person name="Down M."/>
            <person name="Boyd A.W."/>
            <person name="Alewood P.F."/>
            <person name="Lackmann M."/>
        </authorList>
    </citation>
    <scope>FUNCTION IN CELL-CELL ADHESION</scope>
    <scope>EFNA5-BINDING</scope>
    <scope>SUBCELLULAR LOCATION (ISOFORM 1)</scope>
    <scope>INTERACTION WITH CRK</scope>
    <scope>PHOSPHORYLATION AT TYR-596; TYR-602 AND TYR-779</scope>
</reference>
<reference key="6">
    <citation type="journal article" date="2003" name="Science">
        <title>Mutational analysis of the tyrosine kinome in colorectal cancers.</title>
        <authorList>
            <person name="Bardelli A."/>
            <person name="Parsons D.W."/>
            <person name="Silliman N."/>
            <person name="Ptak J."/>
            <person name="Szabo S."/>
            <person name="Saha S."/>
            <person name="Markowitz S."/>
            <person name="Willson J.K."/>
            <person name="Parmigiani G."/>
            <person name="Kinzler K.W."/>
            <person name="Vogelstein B."/>
            <person name="Velculescu V.E."/>
        </authorList>
    </citation>
    <scope>INVOLVEMENT IN CRC</scope>
</reference>
<reference key="7">
    <citation type="journal article" date="2004" name="J. Biol. Chem.">
        <title>Dissecting the EphA3/Ephrin-A5 interactions using a novel functional mutagenesis screen.</title>
        <authorList>
            <person name="Smith F.M."/>
            <person name="Vearing C."/>
            <person name="Lackmann M."/>
            <person name="Treutlein H."/>
            <person name="Himanen J."/>
            <person name="Chen K."/>
            <person name="Saul A."/>
            <person name="Nikolov D."/>
            <person name="Boyd A.W."/>
        </authorList>
    </citation>
    <scope>EPHRIN LIGAND-BINDING</scope>
    <scope>OLIGOMERIZATION</scope>
    <scope>MUTAGENESIS OF VAL-133 AND PHE-152</scope>
    <scope>INTERACTION WITH CRK</scope>
</reference>
<reference key="8">
    <citation type="journal article" date="2005" name="Cell">
        <title>Adam meets Eph: an ADAM substrate recognition module acts as a molecular switch for ephrin cleavage in trans.</title>
        <authorList>
            <person name="Janes P.W."/>
            <person name="Saha N."/>
            <person name="Barton W.A."/>
            <person name="Kolev M.V."/>
            <person name="Wimmer-Kleikamp S.H."/>
            <person name="Nievergall E."/>
            <person name="Blobel C.P."/>
            <person name="Himanen J.P."/>
            <person name="Lackmann M."/>
            <person name="Nikolov D.B."/>
        </authorList>
    </citation>
    <scope>IDENTIFICATION IN A COMPLEX WITH ADAM10 AND EFNA5</scope>
</reference>
<reference key="9">
    <citation type="journal article" date="2005" name="J. Biol. Chem.">
        <title>Three distinct molecular surfaces in ephrin-A5 are essential for a functional interaction with EphA3.</title>
        <authorList>
            <person name="Day B."/>
            <person name="To C."/>
            <person name="Himanen J.P."/>
            <person name="Smith F.M."/>
            <person name="Nikolov D.B."/>
            <person name="Boyd A.W."/>
            <person name="Lackmann M."/>
        </authorList>
    </citation>
    <scope>EFNA5 LIGAND-BINDING</scope>
</reference>
<reference key="10">
    <citation type="journal article" date="2010" name="J. Cell Biol.">
        <title>PTP1B regulates Eph receptor function and trafficking.</title>
        <authorList>
            <person name="Nievergall E."/>
            <person name="Janes P.W."/>
            <person name="Stegmayer C."/>
            <person name="Vail M.E."/>
            <person name="Haj F.G."/>
            <person name="Teng S.W."/>
            <person name="Neel B.G."/>
            <person name="Bastiaens P.I."/>
            <person name="Lackmann M."/>
        </authorList>
    </citation>
    <scope>INTERACTION WITH PTPN1</scope>
    <scope>PHOSPHORYLATION</scope>
    <scope>DEPHOSPHORYLATION BY PTPN1</scope>
    <scope>SUBCELLULAR LOCATION (ISOFORM 2)</scope>
</reference>
<reference key="11">
    <citation type="journal article" date="2008" name="Structure">
        <title>Autoregulation by the juxtamembrane region of the human ephrin receptor tyrosine kinase A3 (EphA3).</title>
        <authorList>
            <person name="Davis T.L."/>
            <person name="Walker J.R."/>
            <person name="Loppnau P."/>
            <person name="Butler-Cole C."/>
            <person name="Allali-Hassani A."/>
            <person name="Dhe-Paganon S."/>
        </authorList>
    </citation>
    <scope>X-RAY CRYSTALLOGRAPHY (1.07 ANGSTROMS) OF 577-947 IN COMPLEX WITH ATP ANALOG</scope>
    <scope>IDENTIFICATION BY MASS SPECTROMETRY</scope>
    <scope>PHOSPHORYLATION AT TYR-596; TYR-602 AND TYR-701</scope>
    <scope>MUTAGENESIS OF TYR-596; TYR-602; TYR-742 AND SER-768</scope>
</reference>
<reference key="12">
    <citation type="journal article" date="2006" name="Science">
        <title>The consensus coding sequences of human breast and colorectal cancers.</title>
        <authorList>
            <person name="Sjoeblom T."/>
            <person name="Jones S."/>
            <person name="Wood L.D."/>
            <person name="Parsons D.W."/>
            <person name="Lin J."/>
            <person name="Barber T.D."/>
            <person name="Mandelker D."/>
            <person name="Leary R.J."/>
            <person name="Ptak J."/>
            <person name="Silliman N."/>
            <person name="Szabo S."/>
            <person name="Buckhaults P."/>
            <person name="Farrell C."/>
            <person name="Meeh P."/>
            <person name="Markowitz S.D."/>
            <person name="Willis J."/>
            <person name="Dawson D."/>
            <person name="Willson J.K.V."/>
            <person name="Gazdar A.F."/>
            <person name="Hartigan J."/>
            <person name="Wu L."/>
            <person name="Liu C."/>
            <person name="Parmigiani G."/>
            <person name="Park B.H."/>
            <person name="Bachman K.E."/>
            <person name="Papadopoulos N."/>
            <person name="Vogelstein B."/>
            <person name="Kinzler K.W."/>
            <person name="Velculescu V.E."/>
        </authorList>
    </citation>
    <scope>VARIANTS [LARGE SCALE ANALYSIS] LYS-37; SER-85; LEU-621 AND ASN-806</scope>
</reference>
<reference key="13">
    <citation type="journal article" date="2006" name="Hum. Mutat.">
        <title>Somatic mutations of GUCY2F, EPHA3, and NTRK3 in human cancers.</title>
        <authorList>
            <person name="Wood L.D."/>
            <person name="Calhoun E.S."/>
            <person name="Silliman N."/>
            <person name="Ptak J."/>
            <person name="Szabo S."/>
            <person name="Powell S.M."/>
            <person name="Riggins G.J."/>
            <person name="Wang T.L."/>
            <person name="Yan H."/>
            <person name="Gazdar A."/>
            <person name="Kern S.E."/>
            <person name="Pennacchio L."/>
            <person name="Kinzler K.W."/>
            <person name="Vogelstein B."/>
            <person name="Velculescu V.E."/>
        </authorList>
    </citation>
    <scope>VARIANTS LYS-660 AND MET-933</scope>
</reference>
<reference key="14">
    <citation type="journal article" date="2007" name="Nature">
        <title>Patterns of somatic mutation in human cancer genomes.</title>
        <authorList>
            <person name="Greenman C."/>
            <person name="Stephens P."/>
            <person name="Smith R."/>
            <person name="Dalgliesh G.L."/>
            <person name="Hunter C."/>
            <person name="Bignell G."/>
            <person name="Davies H."/>
            <person name="Teague J."/>
            <person name="Butler A."/>
            <person name="Stevens C."/>
            <person name="Edkins S."/>
            <person name="O'Meara S."/>
            <person name="Vastrik I."/>
            <person name="Schmidt E.E."/>
            <person name="Avis T."/>
            <person name="Barthorpe S."/>
            <person name="Bhamra G."/>
            <person name="Buck G."/>
            <person name="Choudhury B."/>
            <person name="Clements J."/>
            <person name="Cole J."/>
            <person name="Dicks E."/>
            <person name="Forbes S."/>
            <person name="Gray K."/>
            <person name="Halliday K."/>
            <person name="Harrison R."/>
            <person name="Hills K."/>
            <person name="Hinton J."/>
            <person name="Jenkinson A."/>
            <person name="Jones D."/>
            <person name="Menzies A."/>
            <person name="Mironenko T."/>
            <person name="Perry J."/>
            <person name="Raine K."/>
            <person name="Richardson D."/>
            <person name="Shepherd R."/>
            <person name="Small A."/>
            <person name="Tofts C."/>
            <person name="Varian J."/>
            <person name="Webb T."/>
            <person name="West S."/>
            <person name="Widaa S."/>
            <person name="Yates A."/>
            <person name="Cahill D.P."/>
            <person name="Louis D.N."/>
            <person name="Goldstraw P."/>
            <person name="Nicholson A.G."/>
            <person name="Brasseur F."/>
            <person name="Looijenga L."/>
            <person name="Weber B.L."/>
            <person name="Chiew Y.-E."/>
            <person name="DeFazio A."/>
            <person name="Greaves M.F."/>
            <person name="Green A.R."/>
            <person name="Campbell P."/>
            <person name="Birney E."/>
            <person name="Easton D.F."/>
            <person name="Chenevix-Trench G."/>
            <person name="Tan M.-H."/>
            <person name="Khoo S.K."/>
            <person name="Teh B.T."/>
            <person name="Yuen S.T."/>
            <person name="Leung S.Y."/>
            <person name="Wooster R."/>
            <person name="Futreal P.A."/>
            <person name="Stratton M.R."/>
        </authorList>
    </citation>
    <scope>VARIANTS [LARGE SCALE ANALYSIS] TYR-229; PHE-449; LEU-518; VAL-564; SER-568; PRO-590; GLU-766; GLY-777; HIS-914 AND ARG-924</scope>
</reference>
<reference key="15">
    <citation type="journal article" date="2010" name="PLoS ONE">
        <title>Mutational profiling of kinases in human tumours of pancreatic origin identifies candidate cancer genes in ductal and ampulla of vater carcinomas.</title>
        <authorList>
            <person name="Corbo V."/>
            <person name="Ritelli R."/>
            <person name="Barbi S."/>
            <person name="Funel N."/>
            <person name="Campani D."/>
            <person name="Bardelli A."/>
            <person name="Scarpa A."/>
        </authorList>
    </citation>
    <scope>VARIANT ASN-207</scope>
</reference>
<dbReference type="EC" id="2.7.10.1"/>
<dbReference type="EMBL" id="M83941">
    <property type="protein sequence ID" value="AAA58633.1"/>
    <property type="molecule type" value="mRNA"/>
</dbReference>
<dbReference type="EMBL" id="AF213459">
    <property type="protein sequence ID" value="AAG43576.1"/>
    <property type="molecule type" value="mRNA"/>
</dbReference>
<dbReference type="EMBL" id="AF213460">
    <property type="protein sequence ID" value="AAG43577.1"/>
    <property type="molecule type" value="mRNA"/>
</dbReference>
<dbReference type="CCDS" id="CCDS2922.1">
    <molecule id="P29320-1"/>
</dbReference>
<dbReference type="CCDS" id="CCDS46875.1">
    <molecule id="P29320-2"/>
</dbReference>
<dbReference type="PIR" id="A38224">
    <property type="entry name" value="A38224"/>
</dbReference>
<dbReference type="RefSeq" id="NP_005224.2">
    <molecule id="P29320-1"/>
    <property type="nucleotide sequence ID" value="NM_005233.5"/>
</dbReference>
<dbReference type="RefSeq" id="NP_872585.1">
    <molecule id="P29320-2"/>
    <property type="nucleotide sequence ID" value="NM_182644.3"/>
</dbReference>
<dbReference type="PDB" id="2GSF">
    <property type="method" value="X-ray"/>
    <property type="resolution" value="1.77 A"/>
    <property type="chains" value="A=577-947"/>
</dbReference>
<dbReference type="PDB" id="2QO2">
    <property type="method" value="X-ray"/>
    <property type="resolution" value="1.60 A"/>
    <property type="chains" value="A=577-947"/>
</dbReference>
<dbReference type="PDB" id="2QO7">
    <property type="method" value="X-ray"/>
    <property type="resolution" value="1.60 A"/>
    <property type="chains" value="A=577-947"/>
</dbReference>
<dbReference type="PDB" id="2QO9">
    <property type="method" value="X-ray"/>
    <property type="resolution" value="1.55 A"/>
    <property type="chains" value="A=577-947"/>
</dbReference>
<dbReference type="PDB" id="2QOB">
    <property type="method" value="X-ray"/>
    <property type="resolution" value="1.65 A"/>
    <property type="chains" value="A=609-947"/>
</dbReference>
<dbReference type="PDB" id="2QOC">
    <property type="method" value="X-ray"/>
    <property type="resolution" value="1.25 A"/>
    <property type="chains" value="A=609-947"/>
</dbReference>
<dbReference type="PDB" id="2QOD">
    <property type="method" value="X-ray"/>
    <property type="resolution" value="1.15 A"/>
    <property type="chains" value="A=577-947"/>
</dbReference>
<dbReference type="PDB" id="2QOF">
    <property type="method" value="X-ray"/>
    <property type="resolution" value="1.20 A"/>
    <property type="chains" value="A=577-947"/>
</dbReference>
<dbReference type="PDB" id="2QOI">
    <property type="method" value="X-ray"/>
    <property type="resolution" value="1.25 A"/>
    <property type="chains" value="A=577-947"/>
</dbReference>
<dbReference type="PDB" id="2QOK">
    <property type="method" value="X-ray"/>
    <property type="resolution" value="1.20 A"/>
    <property type="chains" value="A=577-947"/>
</dbReference>
<dbReference type="PDB" id="2QOL">
    <property type="method" value="X-ray"/>
    <property type="resolution" value="1.07 A"/>
    <property type="chains" value="A=577-947"/>
</dbReference>
<dbReference type="PDB" id="2QON">
    <property type="method" value="X-ray"/>
    <property type="resolution" value="1.79 A"/>
    <property type="chains" value="A=577-947"/>
</dbReference>
<dbReference type="PDB" id="2QOO">
    <property type="method" value="X-ray"/>
    <property type="resolution" value="1.25 A"/>
    <property type="chains" value="A=577-947"/>
</dbReference>
<dbReference type="PDB" id="2QOQ">
    <property type="method" value="X-ray"/>
    <property type="resolution" value="1.60 A"/>
    <property type="chains" value="A=577-947"/>
</dbReference>
<dbReference type="PDB" id="3DZQ">
    <property type="method" value="X-ray"/>
    <property type="resolution" value="1.75 A"/>
    <property type="chains" value="A=609-947"/>
</dbReference>
<dbReference type="PDB" id="3FXX">
    <property type="method" value="X-ray"/>
    <property type="resolution" value="1.70 A"/>
    <property type="chains" value="A=577-947"/>
</dbReference>
<dbReference type="PDB" id="3FY2">
    <property type="method" value="X-ray"/>
    <property type="resolution" value="1.80 A"/>
    <property type="chains" value="A=577-947"/>
</dbReference>
<dbReference type="PDB" id="4G2F">
    <property type="method" value="X-ray"/>
    <property type="resolution" value="1.70 A"/>
    <property type="chains" value="A=609-947"/>
</dbReference>
<dbReference type="PDB" id="4GK2">
    <property type="method" value="X-ray"/>
    <property type="resolution" value="2.20 A"/>
    <property type="chains" value="A=609-947"/>
</dbReference>
<dbReference type="PDB" id="4GK3">
    <property type="method" value="X-ray"/>
    <property type="resolution" value="1.90 A"/>
    <property type="chains" value="A=609-947"/>
</dbReference>
<dbReference type="PDB" id="4GK4">
    <property type="method" value="X-ray"/>
    <property type="resolution" value="2.10 A"/>
    <property type="chains" value="A=609-947"/>
</dbReference>
<dbReference type="PDB" id="4L0P">
    <property type="method" value="X-ray"/>
    <property type="resolution" value="2.26 A"/>
    <property type="chains" value="A=29-201"/>
</dbReference>
<dbReference type="PDB" id="4P4C">
    <property type="method" value="X-ray"/>
    <property type="resolution" value="1.60 A"/>
    <property type="chains" value="A=609-947"/>
</dbReference>
<dbReference type="PDB" id="4P5Q">
    <property type="method" value="X-ray"/>
    <property type="resolution" value="1.35 A"/>
    <property type="chains" value="A=606-947"/>
</dbReference>
<dbReference type="PDB" id="4P5Z">
    <property type="method" value="X-ray"/>
    <property type="resolution" value="2.00 A"/>
    <property type="chains" value="A=606-947"/>
</dbReference>
<dbReference type="PDB" id="4TWN">
    <property type="method" value="X-ray"/>
    <property type="resolution" value="1.71 A"/>
    <property type="chains" value="A=609-947"/>
</dbReference>
<dbReference type="PDB" id="4TWO">
    <property type="method" value="X-ray"/>
    <property type="resolution" value="2.05 A"/>
    <property type="chains" value="A=609-947"/>
</dbReference>
<dbReference type="PDB" id="6IN0">
    <property type="method" value="X-ray"/>
    <property type="resolution" value="1.50 A"/>
    <property type="chains" value="A=612-904"/>
</dbReference>
<dbReference type="PDBsum" id="2GSF"/>
<dbReference type="PDBsum" id="2QO2"/>
<dbReference type="PDBsum" id="2QO7"/>
<dbReference type="PDBsum" id="2QO9"/>
<dbReference type="PDBsum" id="2QOB"/>
<dbReference type="PDBsum" id="2QOC"/>
<dbReference type="PDBsum" id="2QOD"/>
<dbReference type="PDBsum" id="2QOF"/>
<dbReference type="PDBsum" id="2QOI"/>
<dbReference type="PDBsum" id="2QOK"/>
<dbReference type="PDBsum" id="2QOL"/>
<dbReference type="PDBsum" id="2QON"/>
<dbReference type="PDBsum" id="2QOO"/>
<dbReference type="PDBsum" id="2QOQ"/>
<dbReference type="PDBsum" id="3DZQ"/>
<dbReference type="PDBsum" id="3FXX"/>
<dbReference type="PDBsum" id="3FY2"/>
<dbReference type="PDBsum" id="4G2F"/>
<dbReference type="PDBsum" id="4GK2"/>
<dbReference type="PDBsum" id="4GK3"/>
<dbReference type="PDBsum" id="4GK4"/>
<dbReference type="PDBsum" id="4L0P"/>
<dbReference type="PDBsum" id="4P4C"/>
<dbReference type="PDBsum" id="4P5Q"/>
<dbReference type="PDBsum" id="4P5Z"/>
<dbReference type="PDBsum" id="4TWN"/>
<dbReference type="PDBsum" id="4TWO"/>
<dbReference type="PDBsum" id="6IN0"/>
<dbReference type="SMR" id="P29320"/>
<dbReference type="BioGRID" id="108356">
    <property type="interactions" value="107"/>
</dbReference>
<dbReference type="DIP" id="DIP-40307N"/>
<dbReference type="FunCoup" id="P29320">
    <property type="interactions" value="1027"/>
</dbReference>
<dbReference type="IntAct" id="P29320">
    <property type="interactions" value="80"/>
</dbReference>
<dbReference type="MINT" id="P29320"/>
<dbReference type="STRING" id="9606.ENSP00000337451"/>
<dbReference type="BindingDB" id="P29320"/>
<dbReference type="ChEMBL" id="CHEMBL4954"/>
<dbReference type="DrugBank" id="DB12010">
    <property type="generic name" value="Fostamatinib"/>
</dbReference>
<dbReference type="DrugCentral" id="P29320"/>
<dbReference type="GuidetoPHARMACOLOGY" id="1823"/>
<dbReference type="GlyCosmos" id="P29320">
    <property type="glycosylation" value="5 sites, No reported glycans"/>
</dbReference>
<dbReference type="GlyGen" id="P29320">
    <property type="glycosylation" value="8 sites, 3 N-linked glycans (3 sites)"/>
</dbReference>
<dbReference type="iPTMnet" id="P29320"/>
<dbReference type="MetOSite" id="P29320"/>
<dbReference type="PhosphoSitePlus" id="P29320"/>
<dbReference type="SwissPalm" id="P29320"/>
<dbReference type="BioMuta" id="EPHA3"/>
<dbReference type="DMDM" id="116241351"/>
<dbReference type="CPTAC" id="CPTAC-1774"/>
<dbReference type="CPTAC" id="CPTAC-3202"/>
<dbReference type="CPTAC" id="CPTAC-3203"/>
<dbReference type="jPOST" id="P29320"/>
<dbReference type="MassIVE" id="P29320"/>
<dbReference type="PaxDb" id="9606-ENSP00000337451"/>
<dbReference type="PeptideAtlas" id="P29320"/>
<dbReference type="ProteomicsDB" id="54536">
    <molecule id="P29320-1"/>
</dbReference>
<dbReference type="ProteomicsDB" id="54537">
    <molecule id="P29320-2"/>
</dbReference>
<dbReference type="ABCD" id="P29320">
    <property type="antibodies" value="1 sequenced antibody"/>
</dbReference>
<dbReference type="Antibodypedia" id="4182">
    <property type="antibodies" value="555 antibodies from 40 providers"/>
</dbReference>
<dbReference type="DNASU" id="2042"/>
<dbReference type="Ensembl" id="ENST00000336596.7">
    <molecule id="P29320-1"/>
    <property type="protein sequence ID" value="ENSP00000337451.2"/>
    <property type="gene ID" value="ENSG00000044524.11"/>
</dbReference>
<dbReference type="Ensembl" id="ENST00000452448.6">
    <molecule id="P29320-2"/>
    <property type="protein sequence ID" value="ENSP00000399926.2"/>
    <property type="gene ID" value="ENSG00000044524.11"/>
</dbReference>
<dbReference type="GeneID" id="2042"/>
<dbReference type="KEGG" id="hsa:2042"/>
<dbReference type="MANE-Select" id="ENST00000336596.7">
    <property type="protein sequence ID" value="ENSP00000337451.2"/>
    <property type="RefSeq nucleotide sequence ID" value="NM_005233.6"/>
    <property type="RefSeq protein sequence ID" value="NP_005224.2"/>
</dbReference>
<dbReference type="UCSC" id="uc003dqx.2">
    <molecule id="P29320-1"/>
    <property type="organism name" value="human"/>
</dbReference>
<dbReference type="AGR" id="HGNC:3387"/>
<dbReference type="CTD" id="2042"/>
<dbReference type="DisGeNET" id="2042"/>
<dbReference type="GeneCards" id="EPHA3"/>
<dbReference type="HGNC" id="HGNC:3387">
    <property type="gene designation" value="EPHA3"/>
</dbReference>
<dbReference type="HPA" id="ENSG00000044524">
    <property type="expression patterns" value="Tissue enhanced (prostate)"/>
</dbReference>
<dbReference type="MalaCards" id="EPHA3"/>
<dbReference type="MIM" id="114500">
    <property type="type" value="phenotype"/>
</dbReference>
<dbReference type="MIM" id="179611">
    <property type="type" value="gene"/>
</dbReference>
<dbReference type="neXtProt" id="NX_P29320"/>
<dbReference type="OpenTargets" id="ENSG00000044524"/>
<dbReference type="PharmGKB" id="PA27819"/>
<dbReference type="VEuPathDB" id="HostDB:ENSG00000044524"/>
<dbReference type="eggNOG" id="KOG0196">
    <property type="taxonomic scope" value="Eukaryota"/>
</dbReference>
<dbReference type="GeneTree" id="ENSGT00940000157088"/>
<dbReference type="HOGENOM" id="CLU_000288_141_3_1"/>
<dbReference type="InParanoid" id="P29320"/>
<dbReference type="OMA" id="GNTKCAK"/>
<dbReference type="OrthoDB" id="4062651at2759"/>
<dbReference type="PAN-GO" id="P29320">
    <property type="GO annotations" value="8 GO annotations based on evolutionary models"/>
</dbReference>
<dbReference type="PhylomeDB" id="P29320"/>
<dbReference type="TreeFam" id="TF315608"/>
<dbReference type="BRENDA" id="2.7.10.1">
    <property type="organism ID" value="2681"/>
</dbReference>
<dbReference type="PathwayCommons" id="P29320"/>
<dbReference type="Reactome" id="R-HSA-2682334">
    <property type="pathway name" value="EPH-Ephrin signaling"/>
</dbReference>
<dbReference type="Reactome" id="R-HSA-3928663">
    <property type="pathway name" value="EPHA-mediated growth cone collapse"/>
</dbReference>
<dbReference type="Reactome" id="R-HSA-3928665">
    <property type="pathway name" value="EPH-ephrin mediated repulsion of cells"/>
</dbReference>
<dbReference type="SignaLink" id="P29320"/>
<dbReference type="SIGNOR" id="P29320"/>
<dbReference type="BioGRID-ORCS" id="2042">
    <property type="hits" value="12 hits in 1194 CRISPR screens"/>
</dbReference>
<dbReference type="ChiTaRS" id="EPHA3">
    <property type="organism name" value="human"/>
</dbReference>
<dbReference type="EvolutionaryTrace" id="P29320"/>
<dbReference type="GeneWiki" id="EPH_receptor_A3"/>
<dbReference type="GenomeRNAi" id="2042"/>
<dbReference type="Pharos" id="P29320">
    <property type="development level" value="Tchem"/>
</dbReference>
<dbReference type="PRO" id="PR:P29320"/>
<dbReference type="Proteomes" id="UP000005640">
    <property type="component" value="Chromosome 3"/>
</dbReference>
<dbReference type="RNAct" id="P29320">
    <property type="molecule type" value="protein"/>
</dbReference>
<dbReference type="Bgee" id="ENSG00000044524">
    <property type="expression patterns" value="Expressed in ganglionic eminence and 159 other cell types or tissues"/>
</dbReference>
<dbReference type="ExpressionAtlas" id="P29320">
    <property type="expression patterns" value="baseline and differential"/>
</dbReference>
<dbReference type="GO" id="GO:0015629">
    <property type="term" value="C:actin cytoskeleton"/>
    <property type="evidence" value="ECO:0000314"/>
    <property type="project" value="HPA"/>
</dbReference>
<dbReference type="GO" id="GO:0005829">
    <property type="term" value="C:cytosol"/>
    <property type="evidence" value="ECO:0000314"/>
    <property type="project" value="HPA"/>
</dbReference>
<dbReference type="GO" id="GO:0030425">
    <property type="term" value="C:dendrite"/>
    <property type="evidence" value="ECO:0000318"/>
    <property type="project" value="GO_Central"/>
</dbReference>
<dbReference type="GO" id="GO:0005769">
    <property type="term" value="C:early endosome"/>
    <property type="evidence" value="ECO:0000314"/>
    <property type="project" value="UniProtKB"/>
</dbReference>
<dbReference type="GO" id="GO:0005576">
    <property type="term" value="C:extracellular region"/>
    <property type="evidence" value="ECO:0007669"/>
    <property type="project" value="UniProtKB-SubCell"/>
</dbReference>
<dbReference type="GO" id="GO:0031965">
    <property type="term" value="C:nuclear membrane"/>
    <property type="evidence" value="ECO:0000314"/>
    <property type="project" value="HPA"/>
</dbReference>
<dbReference type="GO" id="GO:0005654">
    <property type="term" value="C:nucleoplasm"/>
    <property type="evidence" value="ECO:0000314"/>
    <property type="project" value="HPA"/>
</dbReference>
<dbReference type="GO" id="GO:0005886">
    <property type="term" value="C:plasma membrane"/>
    <property type="evidence" value="ECO:0000314"/>
    <property type="project" value="HPA"/>
</dbReference>
<dbReference type="GO" id="GO:0005524">
    <property type="term" value="F:ATP binding"/>
    <property type="evidence" value="ECO:0007669"/>
    <property type="project" value="UniProtKB-KW"/>
</dbReference>
<dbReference type="GO" id="GO:0005003">
    <property type="term" value="F:ephrin receptor activity"/>
    <property type="evidence" value="ECO:0000314"/>
    <property type="project" value="ARUK-UCL"/>
</dbReference>
<dbReference type="GO" id="GO:0005004">
    <property type="term" value="F:GPI-linked ephrin receptor activity"/>
    <property type="evidence" value="ECO:0000314"/>
    <property type="project" value="UniProtKB"/>
</dbReference>
<dbReference type="GO" id="GO:0005005">
    <property type="term" value="F:transmembrane-ephrin receptor activity"/>
    <property type="evidence" value="ECO:0000318"/>
    <property type="project" value="GO_Central"/>
</dbReference>
<dbReference type="GO" id="GO:0007411">
    <property type="term" value="P:axon guidance"/>
    <property type="evidence" value="ECO:0000318"/>
    <property type="project" value="GO_Central"/>
</dbReference>
<dbReference type="GO" id="GO:0007155">
    <property type="term" value="P:cell adhesion"/>
    <property type="evidence" value="ECO:0007669"/>
    <property type="project" value="UniProtKB-KW"/>
</dbReference>
<dbReference type="GO" id="GO:0016477">
    <property type="term" value="P:cell migration"/>
    <property type="evidence" value="ECO:0000250"/>
    <property type="project" value="UniProtKB"/>
</dbReference>
<dbReference type="GO" id="GO:0071300">
    <property type="term" value="P:cellular response to retinoic acid"/>
    <property type="evidence" value="ECO:0000315"/>
    <property type="project" value="BHF-UCL"/>
</dbReference>
<dbReference type="GO" id="GO:0048013">
    <property type="term" value="P:ephrin receptor signaling pathway"/>
    <property type="evidence" value="ECO:0000314"/>
    <property type="project" value="UniProtKB"/>
</dbReference>
<dbReference type="GO" id="GO:0097156">
    <property type="term" value="P:fasciculation of motor neuron axon"/>
    <property type="evidence" value="ECO:0000250"/>
    <property type="project" value="UniProtKB"/>
</dbReference>
<dbReference type="GO" id="GO:0097155">
    <property type="term" value="P:fasciculation of sensory neuron axon"/>
    <property type="evidence" value="ECO:0000250"/>
    <property type="project" value="UniProtKB"/>
</dbReference>
<dbReference type="GO" id="GO:0045806">
    <property type="term" value="P:negative regulation of endocytosis"/>
    <property type="evidence" value="ECO:0000314"/>
    <property type="project" value="UniProtKB"/>
</dbReference>
<dbReference type="GO" id="GO:0018108">
    <property type="term" value="P:peptidyl-tyrosine phosphorylation"/>
    <property type="evidence" value="ECO:0000314"/>
    <property type="project" value="UniProtKB"/>
</dbReference>
<dbReference type="GO" id="GO:0010976">
    <property type="term" value="P:positive regulation of neuron projection development"/>
    <property type="evidence" value="ECO:0000315"/>
    <property type="project" value="BHF-UCL"/>
</dbReference>
<dbReference type="GO" id="GO:1903078">
    <property type="term" value="P:positive regulation of protein localization to plasma membrane"/>
    <property type="evidence" value="ECO:0000314"/>
    <property type="project" value="UniProtKB"/>
</dbReference>
<dbReference type="GO" id="GO:0032956">
    <property type="term" value="P:regulation of actin cytoskeleton organization"/>
    <property type="evidence" value="ECO:0000314"/>
    <property type="project" value="UniProtKB"/>
</dbReference>
<dbReference type="GO" id="GO:0010717">
    <property type="term" value="P:regulation of epithelial to mesenchymal transition"/>
    <property type="evidence" value="ECO:0000250"/>
    <property type="project" value="UniProtKB"/>
</dbReference>
<dbReference type="GO" id="GO:0051893">
    <property type="term" value="P:regulation of focal adhesion assembly"/>
    <property type="evidence" value="ECO:0000314"/>
    <property type="project" value="UniProtKB"/>
</dbReference>
<dbReference type="GO" id="GO:0043087">
    <property type="term" value="P:regulation of GTPase activity"/>
    <property type="evidence" value="ECO:0000314"/>
    <property type="project" value="UniProtKB"/>
</dbReference>
<dbReference type="GO" id="GO:0070507">
    <property type="term" value="P:regulation of microtubule cytoskeleton organization"/>
    <property type="evidence" value="ECO:0000314"/>
    <property type="project" value="UniProtKB"/>
</dbReference>
<dbReference type="CDD" id="cd10481">
    <property type="entry name" value="EphR_LBD_A3"/>
    <property type="match status" value="1"/>
</dbReference>
<dbReference type="CDD" id="cd00063">
    <property type="entry name" value="FN3"/>
    <property type="match status" value="2"/>
</dbReference>
<dbReference type="CDD" id="cd05066">
    <property type="entry name" value="PTKc_EphR_A"/>
    <property type="match status" value="1"/>
</dbReference>
<dbReference type="FunFam" id="1.10.150.50:FF:000046">
    <property type="entry name" value="ephrin type-A receptor 3"/>
    <property type="match status" value="1"/>
</dbReference>
<dbReference type="FunFam" id="2.60.40.10:FF:000041">
    <property type="entry name" value="ephrin type-A receptor 3"/>
    <property type="match status" value="1"/>
</dbReference>
<dbReference type="FunFam" id="1.10.510.10:FF:000019">
    <property type="entry name" value="Ephrin type-A receptor 5"/>
    <property type="match status" value="1"/>
</dbReference>
<dbReference type="FunFam" id="2.10.50.10:FF:000001">
    <property type="entry name" value="Ephrin type-A receptor 5"/>
    <property type="match status" value="1"/>
</dbReference>
<dbReference type="FunFam" id="2.60.40.10:FF:000045">
    <property type="entry name" value="Ephrin type-A receptor 5"/>
    <property type="match status" value="1"/>
</dbReference>
<dbReference type="FunFam" id="2.60.40.1770:FF:000001">
    <property type="entry name" value="Ephrin type-A receptor 5"/>
    <property type="match status" value="1"/>
</dbReference>
<dbReference type="FunFam" id="3.30.200.20:FF:000001">
    <property type="entry name" value="Ephrin type-A receptor 5"/>
    <property type="match status" value="1"/>
</dbReference>
<dbReference type="FunFam" id="2.60.120.260:FF:000001">
    <property type="entry name" value="Ephrin type-A receptor 7"/>
    <property type="match status" value="1"/>
</dbReference>
<dbReference type="Gene3D" id="2.60.40.1770">
    <property type="entry name" value="ephrin a2 ectodomain"/>
    <property type="match status" value="1"/>
</dbReference>
<dbReference type="Gene3D" id="2.60.120.260">
    <property type="entry name" value="Galactose-binding domain-like"/>
    <property type="match status" value="1"/>
</dbReference>
<dbReference type="Gene3D" id="2.60.40.10">
    <property type="entry name" value="Immunoglobulins"/>
    <property type="match status" value="2"/>
</dbReference>
<dbReference type="Gene3D" id="3.30.200.20">
    <property type="entry name" value="Phosphorylase Kinase, domain 1"/>
    <property type="match status" value="1"/>
</dbReference>
<dbReference type="Gene3D" id="1.10.150.50">
    <property type="entry name" value="Transcription Factor, Ets-1"/>
    <property type="match status" value="1"/>
</dbReference>
<dbReference type="Gene3D" id="1.10.510.10">
    <property type="entry name" value="Transferase(Phosphotransferase) domain 1"/>
    <property type="match status" value="1"/>
</dbReference>
<dbReference type="Gene3D" id="2.10.50.10">
    <property type="entry name" value="Tumor Necrosis Factor Receptor, subunit A, domain 2"/>
    <property type="match status" value="1"/>
</dbReference>
<dbReference type="InterPro" id="IPR027936">
    <property type="entry name" value="Eph_TM"/>
</dbReference>
<dbReference type="InterPro" id="IPR034266">
    <property type="entry name" value="EphA3_rcpt_lig-bd"/>
</dbReference>
<dbReference type="InterPro" id="IPR001090">
    <property type="entry name" value="Ephrin_rcpt_lig-bd_dom"/>
</dbReference>
<dbReference type="InterPro" id="IPR050449">
    <property type="entry name" value="Ephrin_rcpt_TKs"/>
</dbReference>
<dbReference type="InterPro" id="IPR003961">
    <property type="entry name" value="FN3_dom"/>
</dbReference>
<dbReference type="InterPro" id="IPR036116">
    <property type="entry name" value="FN3_sf"/>
</dbReference>
<dbReference type="InterPro" id="IPR008979">
    <property type="entry name" value="Galactose-bd-like_sf"/>
</dbReference>
<dbReference type="InterPro" id="IPR009030">
    <property type="entry name" value="Growth_fac_rcpt_cys_sf"/>
</dbReference>
<dbReference type="InterPro" id="IPR013783">
    <property type="entry name" value="Ig-like_fold"/>
</dbReference>
<dbReference type="InterPro" id="IPR011009">
    <property type="entry name" value="Kinase-like_dom_sf"/>
</dbReference>
<dbReference type="InterPro" id="IPR000719">
    <property type="entry name" value="Prot_kinase_dom"/>
</dbReference>
<dbReference type="InterPro" id="IPR017441">
    <property type="entry name" value="Protein_kinase_ATP_BS"/>
</dbReference>
<dbReference type="InterPro" id="IPR001660">
    <property type="entry name" value="SAM"/>
</dbReference>
<dbReference type="InterPro" id="IPR013761">
    <property type="entry name" value="SAM/pointed_sf"/>
</dbReference>
<dbReference type="InterPro" id="IPR001245">
    <property type="entry name" value="Ser-Thr/Tyr_kinase_cat_dom"/>
</dbReference>
<dbReference type="InterPro" id="IPR011641">
    <property type="entry name" value="Tyr-kin_ephrin_A/B_rcpt-like"/>
</dbReference>
<dbReference type="InterPro" id="IPR008266">
    <property type="entry name" value="Tyr_kinase_AS"/>
</dbReference>
<dbReference type="InterPro" id="IPR020635">
    <property type="entry name" value="Tyr_kinase_cat_dom"/>
</dbReference>
<dbReference type="InterPro" id="IPR016257">
    <property type="entry name" value="Tyr_kinase_ephrin_rcpt"/>
</dbReference>
<dbReference type="InterPro" id="IPR001426">
    <property type="entry name" value="Tyr_kinase_rcpt_V_CS"/>
</dbReference>
<dbReference type="PANTHER" id="PTHR46877">
    <property type="entry name" value="EPH RECEPTOR A5"/>
    <property type="match status" value="1"/>
</dbReference>
<dbReference type="PANTHER" id="PTHR46877:SF12">
    <property type="entry name" value="EPHRIN TYPE-A RECEPTOR 3"/>
    <property type="match status" value="1"/>
</dbReference>
<dbReference type="Pfam" id="PF14575">
    <property type="entry name" value="EphA2_TM"/>
    <property type="match status" value="1"/>
</dbReference>
<dbReference type="Pfam" id="PF01404">
    <property type="entry name" value="Ephrin_lbd"/>
    <property type="match status" value="1"/>
</dbReference>
<dbReference type="Pfam" id="PF07699">
    <property type="entry name" value="Ephrin_rec_like"/>
    <property type="match status" value="1"/>
</dbReference>
<dbReference type="Pfam" id="PF00041">
    <property type="entry name" value="fn3"/>
    <property type="match status" value="2"/>
</dbReference>
<dbReference type="Pfam" id="PF07714">
    <property type="entry name" value="PK_Tyr_Ser-Thr"/>
    <property type="match status" value="1"/>
</dbReference>
<dbReference type="Pfam" id="PF07647">
    <property type="entry name" value="SAM_2"/>
    <property type="match status" value="1"/>
</dbReference>
<dbReference type="PIRSF" id="PIRSF000666">
    <property type="entry name" value="TyrPK_ephrin_receptor"/>
    <property type="match status" value="1"/>
</dbReference>
<dbReference type="PRINTS" id="PR00014">
    <property type="entry name" value="FNTYPEIII"/>
</dbReference>
<dbReference type="PRINTS" id="PR00109">
    <property type="entry name" value="TYRKINASE"/>
</dbReference>
<dbReference type="SMART" id="SM00615">
    <property type="entry name" value="EPH_lbd"/>
    <property type="match status" value="1"/>
</dbReference>
<dbReference type="SMART" id="SM01411">
    <property type="entry name" value="Ephrin_rec_like"/>
    <property type="match status" value="1"/>
</dbReference>
<dbReference type="SMART" id="SM00060">
    <property type="entry name" value="FN3"/>
    <property type="match status" value="2"/>
</dbReference>
<dbReference type="SMART" id="SM00454">
    <property type="entry name" value="SAM"/>
    <property type="match status" value="1"/>
</dbReference>
<dbReference type="SMART" id="SM00219">
    <property type="entry name" value="TyrKc"/>
    <property type="match status" value="1"/>
</dbReference>
<dbReference type="SUPFAM" id="SSF49265">
    <property type="entry name" value="Fibronectin type III"/>
    <property type="match status" value="1"/>
</dbReference>
<dbReference type="SUPFAM" id="SSF49785">
    <property type="entry name" value="Galactose-binding domain-like"/>
    <property type="match status" value="1"/>
</dbReference>
<dbReference type="SUPFAM" id="SSF57184">
    <property type="entry name" value="Growth factor receptor domain"/>
    <property type="match status" value="1"/>
</dbReference>
<dbReference type="SUPFAM" id="SSF56112">
    <property type="entry name" value="Protein kinase-like (PK-like)"/>
    <property type="match status" value="1"/>
</dbReference>
<dbReference type="SUPFAM" id="SSF47769">
    <property type="entry name" value="SAM/Pointed domain"/>
    <property type="match status" value="1"/>
</dbReference>
<dbReference type="PROSITE" id="PS01186">
    <property type="entry name" value="EGF_2"/>
    <property type="match status" value="1"/>
</dbReference>
<dbReference type="PROSITE" id="PS51550">
    <property type="entry name" value="EPH_LBD"/>
    <property type="match status" value="1"/>
</dbReference>
<dbReference type="PROSITE" id="PS50853">
    <property type="entry name" value="FN3"/>
    <property type="match status" value="2"/>
</dbReference>
<dbReference type="PROSITE" id="PS00107">
    <property type="entry name" value="PROTEIN_KINASE_ATP"/>
    <property type="match status" value="1"/>
</dbReference>
<dbReference type="PROSITE" id="PS50011">
    <property type="entry name" value="PROTEIN_KINASE_DOM"/>
    <property type="match status" value="1"/>
</dbReference>
<dbReference type="PROSITE" id="PS00109">
    <property type="entry name" value="PROTEIN_KINASE_TYR"/>
    <property type="match status" value="1"/>
</dbReference>
<dbReference type="PROSITE" id="PS00790">
    <property type="entry name" value="RECEPTOR_TYR_KIN_V_1"/>
    <property type="match status" value="1"/>
</dbReference>
<dbReference type="PROSITE" id="PS00791">
    <property type="entry name" value="RECEPTOR_TYR_KIN_V_2"/>
    <property type="match status" value="1"/>
</dbReference>
<dbReference type="PROSITE" id="PS50105">
    <property type="entry name" value="SAM_DOMAIN"/>
    <property type="match status" value="1"/>
</dbReference>
<accession>P29320</accession>
<accession>Q9H2V3</accession>
<accession>Q9H2V4</accession>
<protein>
    <recommendedName>
        <fullName>Ephrin type-A receptor 3</fullName>
        <ecNumber>2.7.10.1</ecNumber>
    </recommendedName>
    <alternativeName>
        <fullName>EPH-like kinase 4</fullName>
        <shortName>EK4</shortName>
        <shortName>hEK4</shortName>
    </alternativeName>
    <alternativeName>
        <fullName>HEK</fullName>
        <shortName>Human embryo kinase</shortName>
    </alternativeName>
    <alternativeName>
        <fullName>Tyrosine-protein kinase TYRO4</fullName>
    </alternativeName>
    <alternativeName>
        <fullName>Tyrosine-protein kinase receptor ETK1</fullName>
        <shortName>Eph-like tyrosine kinase 1</shortName>
    </alternativeName>
</protein>
<feature type="signal peptide" evidence="17">
    <location>
        <begin position="1"/>
        <end position="20"/>
    </location>
</feature>
<feature type="chain" id="PRO_0000016802" description="Ephrin type-A receptor 3">
    <location>
        <begin position="21"/>
        <end position="983"/>
    </location>
</feature>
<feature type="topological domain" description="Extracellular" evidence="3">
    <location>
        <begin position="21"/>
        <end position="541"/>
    </location>
</feature>
<feature type="transmembrane region" description="Helical" evidence="3">
    <location>
        <begin position="542"/>
        <end position="565"/>
    </location>
</feature>
<feature type="topological domain" description="Cytoplasmic" evidence="3">
    <location>
        <begin position="566"/>
        <end position="983"/>
    </location>
</feature>
<feature type="domain" description="Eph LBD" evidence="7">
    <location>
        <begin position="29"/>
        <end position="207"/>
    </location>
</feature>
<feature type="domain" description="Fibronectin type-III 1" evidence="6">
    <location>
        <begin position="325"/>
        <end position="435"/>
    </location>
</feature>
<feature type="domain" description="Fibronectin type-III 2" evidence="6">
    <location>
        <begin position="436"/>
        <end position="531"/>
    </location>
</feature>
<feature type="domain" description="Protein kinase" evidence="4">
    <location>
        <begin position="621"/>
        <end position="882"/>
    </location>
</feature>
<feature type="domain" description="SAM" evidence="5">
    <location>
        <begin position="911"/>
        <end position="975"/>
    </location>
</feature>
<feature type="short sequence motif" description="PDZ-binding" evidence="3">
    <location>
        <begin position="981"/>
        <end position="983"/>
    </location>
</feature>
<feature type="active site" description="Proton acceptor" evidence="4 8">
    <location>
        <position position="746"/>
    </location>
</feature>
<feature type="binding site">
    <location>
        <begin position="628"/>
        <end position="633"/>
    </location>
    <ligand>
        <name>ATP</name>
        <dbReference type="ChEBI" id="CHEBI:30616"/>
    </ligand>
</feature>
<feature type="binding site">
    <location>
        <position position="653"/>
    </location>
    <ligand>
        <name>ATP</name>
        <dbReference type="ChEBI" id="CHEBI:30616"/>
    </ligand>
</feature>
<feature type="binding site">
    <location>
        <begin position="700"/>
        <end position="706"/>
    </location>
    <ligand>
        <name>ATP</name>
        <dbReference type="ChEBI" id="CHEBI:30616"/>
    </ligand>
</feature>
<feature type="binding site">
    <location>
        <begin position="750"/>
        <end position="751"/>
    </location>
    <ligand>
        <name>ATP</name>
        <dbReference type="ChEBI" id="CHEBI:30616"/>
    </ligand>
</feature>
<feature type="modified residue" description="Phosphotyrosine; by autocatalysis" evidence="9 18">
    <location>
        <position position="596"/>
    </location>
</feature>
<feature type="modified residue" description="Phosphotyrosine; by autocatalysis" evidence="9 18">
    <location>
        <position position="602"/>
    </location>
</feature>
<feature type="modified residue" description="Phosphotyrosine; by autocatalysis" evidence="18">
    <location>
        <position position="701"/>
    </location>
</feature>
<feature type="modified residue" description="Phosphotyrosine; by autocatalysis" evidence="9">
    <location>
        <position position="779"/>
    </location>
</feature>
<feature type="modified residue" description="Phosphotyrosine" evidence="2">
    <location>
        <position position="937"/>
    </location>
</feature>
<feature type="glycosylation site" description="N-linked (GlcNAc...) asparagine" evidence="3">
    <location>
        <position position="232"/>
    </location>
</feature>
<feature type="glycosylation site" description="N-linked (GlcNAc...) asparagine" evidence="3">
    <location>
        <position position="337"/>
    </location>
</feature>
<feature type="glycosylation site" description="N-linked (GlcNAc...) asparagine" evidence="3">
    <location>
        <position position="391"/>
    </location>
</feature>
<feature type="glycosylation site" description="N-linked (GlcNAc...) asparagine" evidence="3">
    <location>
        <position position="404"/>
    </location>
</feature>
<feature type="glycosylation site" description="N-linked (GlcNAc...) asparagine" evidence="3">
    <location>
        <position position="493"/>
    </location>
</feature>
<feature type="splice variant" id="VSP_002995" description="In isoform 2." evidence="21">
    <original>SFSISGES</original>
    <variation>CMYYFNAV</variation>
    <location>
        <begin position="532"/>
        <end position="539"/>
    </location>
</feature>
<feature type="splice variant" id="VSP_002996" description="In isoform 2." evidence="21">
    <location>
        <begin position="540"/>
        <end position="983"/>
    </location>
</feature>
<feature type="sequence variant" id="VAR_036086" description="In a colorectal cancer sample; somatic mutation." evidence="15">
    <original>T</original>
    <variation>K</variation>
    <location>
        <position position="37"/>
    </location>
</feature>
<feature type="sequence variant" id="VAR_036087" description="In a colorectal cancer sample; somatic mutation." evidence="15">
    <original>N</original>
    <variation>S</variation>
    <location>
        <position position="85"/>
    </location>
</feature>
<feature type="sequence variant" id="VAR_068853" description="In a pancreatic ductal adenocarcinoma sample; somatic mutation; dbSNP:rs200567888." evidence="19">
    <original>K</original>
    <variation>N</variation>
    <location>
        <position position="207"/>
    </location>
</feature>
<feature type="sequence variant" id="VAR_042126" description="In a lung large cell carcinoma sample; somatic mutation." evidence="16">
    <original>S</original>
    <variation>Y</variation>
    <location>
        <position position="229"/>
    </location>
</feature>
<feature type="sequence variant" id="VAR_042127" description="In a lung neuroendocrine carcinoma sample; somatic mutation." evidence="16">
    <original>S</original>
    <variation>F</variation>
    <location>
        <position position="449"/>
    </location>
</feature>
<feature type="sequence variant" id="VAR_042128" description="In a lung squamous cell carcinoma sample; somatic mutation; requires 2 nucleotide substitutions." evidence="16">
    <original>G</original>
    <variation>L</variation>
    <location>
        <position position="518"/>
    </location>
</feature>
<feature type="sequence variant" id="VAR_042129" description="In dbSNP:rs55712516." evidence="16">
    <original>I</original>
    <variation>V</variation>
    <location>
        <position position="564"/>
    </location>
</feature>
<feature type="sequence variant" id="VAR_042130" description="In dbSNP:rs56077781." evidence="16">
    <original>C</original>
    <variation>S</variation>
    <location>
        <position position="568"/>
    </location>
</feature>
<feature type="sequence variant" id="VAR_042131" description="In dbSNP:rs56081642." evidence="16">
    <original>L</original>
    <variation>P</variation>
    <location>
        <position position="590"/>
    </location>
</feature>
<feature type="sequence variant" id="VAR_036088" description="In a colorectal cancer sample; somatic mutation; dbSNP:rs1414714315." evidence="15">
    <original>I</original>
    <variation>L</variation>
    <location>
        <position position="621"/>
    </location>
</feature>
<feature type="sequence variant" id="VAR_065831" description="In a lung carcinoma sample; somatic mutation." evidence="14">
    <original>T</original>
    <variation>K</variation>
    <location>
        <position position="660"/>
    </location>
</feature>
<feature type="sequence variant" id="VAR_042132" description="In a lung adenocarcinoma sample; somatic mutation." evidence="16">
    <original>G</original>
    <variation>E</variation>
    <location>
        <position position="766"/>
    </location>
</feature>
<feature type="sequence variant" id="VAR_042133" description="In dbSNP:rs34437982." evidence="16">
    <original>A</original>
    <variation>G</variation>
    <location>
        <position position="777"/>
    </location>
</feature>
<feature type="sequence variant" id="VAR_036089" description="In a colorectal cancer sample; somatic mutation; dbSNP:rs2107553474." evidence="15">
    <original>D</original>
    <variation>N</variation>
    <location>
        <position position="806"/>
    </location>
</feature>
<feature type="sequence variant" id="VAR_027919" description="In dbSNP:rs17801309." evidence="16">
    <original>R</original>
    <variation>H</variation>
    <location>
        <position position="914"/>
    </location>
</feature>
<feature type="sequence variant" id="VAR_042134" description="In dbSNP:rs35124509." evidence="11 16">
    <original>W</original>
    <variation>R</variation>
    <location>
        <position position="924"/>
    </location>
</feature>
<feature type="sequence variant" id="VAR_065832" description="In a lung carcinoma sample; somatic mutation; dbSNP:rs372594677." evidence="14">
    <original>T</original>
    <variation>M</variation>
    <location>
        <position position="933"/>
    </location>
</feature>
<feature type="mutagenesis site" description="Loss of EFNA5-binding ability and function." evidence="12">
    <original>V</original>
    <variation>E</variation>
    <location>
        <position position="133"/>
    </location>
</feature>
<feature type="mutagenesis site" description="Loss of EFNA5-binding ability and function." evidence="12">
    <original>F</original>
    <variation>L</variation>
    <location>
        <position position="152"/>
    </location>
</feature>
<feature type="mutagenesis site" description="10-fold suppression of kinase activity; when associated with F-602. Full kinase activity; when associated with F-602 and F-742. Full kinase activity; when associated with F-602 and A-768." evidence="18">
    <original>Y</original>
    <variation>F</variation>
    <location>
        <position position="596"/>
    </location>
</feature>
<feature type="mutagenesis site" description="10-fold suppression of kinase activity; when associated with F-596. Full kinase activity; when associated with F-596 and F-742. Full kinase activity; when associated with F-596 and A-768." evidence="18">
    <original>Y</original>
    <variation>F</variation>
    <location>
        <position position="602"/>
    </location>
</feature>
<feature type="mutagenesis site" description="Full kinase activity; when associated with F-596 and F-602." evidence="18">
    <original>Y</original>
    <variation>F</variation>
    <location>
        <position position="742"/>
    </location>
</feature>
<feature type="mutagenesis site" description="Full kinase activity; when associated with F-596 and F-602." evidence="18">
    <original>S</original>
    <variation>A</variation>
    <location>
        <position position="768"/>
    </location>
</feature>
<feature type="sequence conflict" description="In Ref. 1; AAA58633." evidence="22" ref="1">
    <original>T</original>
    <variation>S</variation>
    <location>
        <position position="911"/>
    </location>
</feature>
<feature type="strand" evidence="28">
    <location>
        <begin position="29"/>
        <end position="34"/>
    </location>
</feature>
<feature type="turn" evidence="28">
    <location>
        <begin position="38"/>
        <end position="41"/>
    </location>
</feature>
<feature type="strand" evidence="28">
    <location>
        <begin position="45"/>
        <end position="48"/>
    </location>
</feature>
<feature type="strand" evidence="28">
    <location>
        <begin position="51"/>
        <end position="58"/>
    </location>
</feature>
<feature type="strand" evidence="28">
    <location>
        <begin position="64"/>
        <end position="71"/>
    </location>
</feature>
<feature type="strand" evidence="28">
    <location>
        <begin position="75"/>
        <end position="77"/>
    </location>
</feature>
<feature type="strand" evidence="28">
    <location>
        <begin position="80"/>
        <end position="83"/>
    </location>
</feature>
<feature type="strand" evidence="28">
    <location>
        <begin position="96"/>
        <end position="104"/>
    </location>
</feature>
<feature type="helix" evidence="28">
    <location>
        <begin position="106"/>
        <end position="108"/>
    </location>
</feature>
<feature type="strand" evidence="28">
    <location>
        <begin position="117"/>
        <end position="128"/>
    </location>
</feature>
<feature type="strand" evidence="28">
    <location>
        <begin position="130"/>
        <end position="132"/>
    </location>
</feature>
<feature type="helix" evidence="28">
    <location>
        <begin position="137"/>
        <end position="139"/>
    </location>
</feature>
<feature type="strand" evidence="28">
    <location>
        <begin position="141"/>
        <end position="147"/>
    </location>
</feature>
<feature type="helix" evidence="28">
    <location>
        <begin position="154"/>
        <end position="159"/>
    </location>
</feature>
<feature type="strand" evidence="28">
    <location>
        <begin position="165"/>
        <end position="170"/>
    </location>
</feature>
<feature type="strand" evidence="28">
    <location>
        <begin position="176"/>
        <end position="200"/>
    </location>
</feature>
<feature type="turn" evidence="26">
    <location>
        <begin position="610"/>
        <end position="612"/>
    </location>
</feature>
<feature type="helix" evidence="26">
    <location>
        <begin position="618"/>
        <end position="620"/>
    </location>
</feature>
<feature type="strand" evidence="26">
    <location>
        <begin position="621"/>
        <end position="629"/>
    </location>
</feature>
<feature type="strand" evidence="26">
    <location>
        <begin position="631"/>
        <end position="641"/>
    </location>
</feature>
<feature type="strand" evidence="26">
    <location>
        <begin position="647"/>
        <end position="654"/>
    </location>
</feature>
<feature type="helix" evidence="26">
    <location>
        <begin position="661"/>
        <end position="674"/>
    </location>
</feature>
<feature type="strand" evidence="26">
    <location>
        <begin position="685"/>
        <end position="689"/>
    </location>
</feature>
<feature type="strand" evidence="26">
    <location>
        <begin position="691"/>
        <end position="694"/>
    </location>
</feature>
<feature type="strand" evidence="26">
    <location>
        <begin position="696"/>
        <end position="700"/>
    </location>
</feature>
<feature type="helix" evidence="26">
    <location>
        <begin position="707"/>
        <end position="712"/>
    </location>
</feature>
<feature type="turn" evidence="26">
    <location>
        <begin position="713"/>
        <end position="716"/>
    </location>
</feature>
<feature type="helix" evidence="26">
    <location>
        <begin position="720"/>
        <end position="739"/>
    </location>
</feature>
<feature type="helix" evidence="26">
    <location>
        <begin position="749"/>
        <end position="751"/>
    </location>
</feature>
<feature type="strand" evidence="26">
    <location>
        <begin position="752"/>
        <end position="754"/>
    </location>
</feature>
<feature type="strand" evidence="26">
    <location>
        <begin position="760"/>
        <end position="762"/>
    </location>
</feature>
<feature type="helix" evidence="29">
    <location>
        <begin position="765"/>
        <end position="768"/>
    </location>
</feature>
<feature type="helix" evidence="25">
    <location>
        <begin position="788"/>
        <end position="790"/>
    </location>
</feature>
<feature type="helix" evidence="26">
    <location>
        <begin position="793"/>
        <end position="798"/>
    </location>
</feature>
<feature type="helix" evidence="26">
    <location>
        <begin position="803"/>
        <end position="818"/>
    </location>
</feature>
<feature type="turn" evidence="23">
    <location>
        <begin position="819"/>
        <end position="821"/>
    </location>
</feature>
<feature type="turn" evidence="26">
    <location>
        <begin position="824"/>
        <end position="827"/>
    </location>
</feature>
<feature type="helix" evidence="26">
    <location>
        <begin position="830"/>
        <end position="838"/>
    </location>
</feature>
<feature type="helix" evidence="26">
    <location>
        <begin position="851"/>
        <end position="860"/>
    </location>
</feature>
<feature type="helix" evidence="26">
    <location>
        <begin position="865"/>
        <end position="867"/>
    </location>
</feature>
<feature type="helix" evidence="26">
    <location>
        <begin position="871"/>
        <end position="883"/>
    </location>
</feature>
<feature type="helix" evidence="26">
    <location>
        <begin position="885"/>
        <end position="889"/>
    </location>
</feature>
<feature type="strand" evidence="27">
    <location>
        <begin position="890"/>
        <end position="892"/>
    </location>
</feature>
<feature type="strand" evidence="24">
    <location>
        <begin position="898"/>
        <end position="903"/>
    </location>
</feature>
<gene>
    <name type="primary">EPHA3</name>
    <name type="synonym">ETK</name>
    <name type="synonym">ETK1</name>
    <name type="synonym">HEK</name>
    <name type="synonym">TYRO4</name>
</gene>
<keyword id="KW-0002">3D-structure</keyword>
<keyword id="KW-0025">Alternative splicing</keyword>
<keyword id="KW-0067">ATP-binding</keyword>
<keyword id="KW-0130">Cell adhesion</keyword>
<keyword id="KW-1003">Cell membrane</keyword>
<keyword id="KW-0903">Direct protein sequencing</keyword>
<keyword id="KW-0325">Glycoprotein</keyword>
<keyword id="KW-0418">Kinase</keyword>
<keyword id="KW-0472">Membrane</keyword>
<keyword id="KW-0547">Nucleotide-binding</keyword>
<keyword id="KW-0597">Phosphoprotein</keyword>
<keyword id="KW-1267">Proteomics identification</keyword>
<keyword id="KW-0675">Receptor</keyword>
<keyword id="KW-1185">Reference proteome</keyword>
<keyword id="KW-0677">Repeat</keyword>
<keyword id="KW-0964">Secreted</keyword>
<keyword id="KW-0732">Signal</keyword>
<keyword id="KW-0808">Transferase</keyword>
<keyword id="KW-0812">Transmembrane</keyword>
<keyword id="KW-1133">Transmembrane helix</keyword>
<keyword id="KW-0829">Tyrosine-protein kinase</keyword>
<organism>
    <name type="scientific">Homo sapiens</name>
    <name type="common">Human</name>
    <dbReference type="NCBI Taxonomy" id="9606"/>
    <lineage>
        <taxon>Eukaryota</taxon>
        <taxon>Metazoa</taxon>
        <taxon>Chordata</taxon>
        <taxon>Craniata</taxon>
        <taxon>Vertebrata</taxon>
        <taxon>Euteleostomi</taxon>
        <taxon>Mammalia</taxon>
        <taxon>Eutheria</taxon>
        <taxon>Euarchontoglires</taxon>
        <taxon>Primates</taxon>
        <taxon>Haplorrhini</taxon>
        <taxon>Catarrhini</taxon>
        <taxon>Hominidae</taxon>
        <taxon>Homo</taxon>
    </lineage>
</organism>
<evidence type="ECO:0000250" key="1"/>
<evidence type="ECO:0000250" key="2">
    <source>
        <dbReference type="UniProtKB" id="P29319"/>
    </source>
</evidence>
<evidence type="ECO:0000255" key="3"/>
<evidence type="ECO:0000255" key="4">
    <source>
        <dbReference type="PROSITE-ProRule" id="PRU00159"/>
    </source>
</evidence>
<evidence type="ECO:0000255" key="5">
    <source>
        <dbReference type="PROSITE-ProRule" id="PRU00184"/>
    </source>
</evidence>
<evidence type="ECO:0000255" key="6">
    <source>
        <dbReference type="PROSITE-ProRule" id="PRU00316"/>
    </source>
</evidence>
<evidence type="ECO:0000255" key="7">
    <source>
        <dbReference type="PROSITE-ProRule" id="PRU00883"/>
    </source>
</evidence>
<evidence type="ECO:0000255" key="8">
    <source>
        <dbReference type="PROSITE-ProRule" id="PRU10028"/>
    </source>
</evidence>
<evidence type="ECO:0000269" key="9">
    <source>
    </source>
</evidence>
<evidence type="ECO:0000269" key="10">
    <source>
    </source>
</evidence>
<evidence type="ECO:0000269" key="11">
    <source>
    </source>
</evidence>
<evidence type="ECO:0000269" key="12">
    <source>
    </source>
</evidence>
<evidence type="ECO:0000269" key="13">
    <source>
    </source>
</evidence>
<evidence type="ECO:0000269" key="14">
    <source>
    </source>
</evidence>
<evidence type="ECO:0000269" key="15">
    <source>
    </source>
</evidence>
<evidence type="ECO:0000269" key="16">
    <source>
    </source>
</evidence>
<evidence type="ECO:0000269" key="17">
    <source>
    </source>
</evidence>
<evidence type="ECO:0000269" key="18">
    <source>
    </source>
</evidence>
<evidence type="ECO:0000269" key="19">
    <source>
    </source>
</evidence>
<evidence type="ECO:0000269" key="20">
    <source>
    </source>
</evidence>
<evidence type="ECO:0000303" key="21">
    <source>
    </source>
</evidence>
<evidence type="ECO:0000305" key="22"/>
<evidence type="ECO:0007829" key="23">
    <source>
        <dbReference type="PDB" id="2QO9"/>
    </source>
</evidence>
<evidence type="ECO:0007829" key="24">
    <source>
        <dbReference type="PDB" id="2QOC"/>
    </source>
</evidence>
<evidence type="ECO:0007829" key="25">
    <source>
        <dbReference type="PDB" id="2QOD"/>
    </source>
</evidence>
<evidence type="ECO:0007829" key="26">
    <source>
        <dbReference type="PDB" id="2QOL"/>
    </source>
</evidence>
<evidence type="ECO:0007829" key="27">
    <source>
        <dbReference type="PDB" id="4G2F"/>
    </source>
</evidence>
<evidence type="ECO:0007829" key="28">
    <source>
        <dbReference type="PDB" id="4L0P"/>
    </source>
</evidence>
<evidence type="ECO:0007829" key="29">
    <source>
        <dbReference type="PDB" id="4TWN"/>
    </source>
</evidence>
<name>EPHA3_HUMAN</name>
<sequence>MDCQLSILLLLSCSVLDSFGELIPQPSNEVNLLDSKTIQGELGWISYPSHGWEEISGVDEHYTPIRTYQVCNVMDHSQNNWLRTNWVPRNSAQKIYVELKFTLRDCNSIPLVLGTCKETFNLYYMESDDDHGVKFREHQFTKIDTIAADESFTQMDLGDRILKLNTEIREVGPVNKKGFYLAFQDVGACVALVSVRVYFKKCPFTVKNLAMFPDTVPMDSQSLVEVRGSCVNNSKEEDPPRMYCSTEGEWLVPIGKCSCNAGYEERGFMCQACRPGFYKALDGNMKCAKCPPHSSTQEDGSMNCRCENNYFRADKDPPSMACTRPPSSPRNVISNINETSVILDWSWPLDTGGRKDVTFNIICKKCGWNIKQCEPCSPNVRFLPRQFGLTNTTVTVTDLLAHTNYTFEIDAVNGVSELSSPPRQFAAVSITTNQAAPSPVLTIKKDRTSRNSISLSWQEPEHPNGIILDYEVKYYEKQEQETSYTILRARGTNVTISSLKPDTIYVFQIRARTAAGYGTNSRKFEFETSPDSFSISGESSQVVMIAISAAVAIILLTVVIYVLIGRFCGYKSKHGADEKRLHFGNGHLKLPGLRTYVDPHTYEDPTQAVHEFAKELDATNISIDKVVGAGEFGEVCSGRLKLPSKKEISVAIKTLKVGYTEKQRRDFLGEASIMGQFDHPNIIRLEGVVTKSKPVMIVTEYMENGSLDSFLRKHDAQFTVIQLVGMLRGIASGMKYLSDMGYVHRDLAARNILINSNLVCKVSDFGLSRVLEDDPEAAYTTRGGKIPIRWTSPEAIAYRKFTSASDVWSYGIVLWEVMSYGERPYWEMSNQDVIKAVDEGYRLPPPMDCPAALYQLMLDCWQKDRNNRPKFEQIVSILDKLIRNPGSLKIITSAAARPSNLLLDQSNVDITTFRTTGDWLNGVWTAHCKEIFTGVEYSSCDTIAKISTDDMKKVGVTVVGPQKKIISSIKALETQSKNGPVPV</sequence>